<gene>
    <name type="primary">TDRD7</name>
    <name type="synonym">PCTAIRE2BP</name>
</gene>
<keyword id="KW-0002">3D-structure</keyword>
<keyword id="KW-0025">Alternative splicing</keyword>
<keyword id="KW-0898">Cataract</keyword>
<keyword id="KW-0963">Cytoplasm</keyword>
<keyword id="KW-0221">Differentiation</keyword>
<keyword id="KW-0225">Disease variant</keyword>
<keyword id="KW-0597">Phosphoprotein</keyword>
<keyword id="KW-1267">Proteomics identification</keyword>
<keyword id="KW-1185">Reference proteome</keyword>
<keyword id="KW-0677">Repeat</keyword>
<keyword id="KW-0694">RNA-binding</keyword>
<keyword id="KW-0744">Spermatogenesis</keyword>
<comment type="function">
    <text evidence="8">Component of specific cytoplasmic RNA granules involved in post-transcriptional regulation of specific genes: probably acts by binding to specific mRNAs and regulating their translation. Required for lens transparency during lens development, by regulating translation of genes such as CRYBB3 and HSPB1 in the developing lens. Also required during spermatogenesis.</text>
</comment>
<comment type="subunit">
    <text evidence="1">Found in a mRNP complex, at least composed of TDRD1, TDRD6, TDRD7 and DDX4. Found in a complex containing CABLES1, CDK16 and CDK17. Interacts with CABLES1, CDK17 and PIWIL1 (By similarity).</text>
</comment>
<comment type="interaction">
    <interactant intactId="EBI-624505">
        <id>Q8NHU6</id>
    </interactant>
    <interactant intactId="EBI-375053">
        <id>P42771</id>
        <label>CDKN2A</label>
    </interactant>
    <organismsDiffer>false</organismsDiffer>
    <experiments>2</experiments>
</comment>
<comment type="interaction">
    <interactant intactId="EBI-624505">
        <id>Q8NHU6</id>
    </interactant>
    <interactant intactId="EBI-618165">
        <id>Q06547</id>
        <label>GABPB1</label>
    </interactant>
    <organismsDiffer>false</organismsDiffer>
    <experiments>5</experiments>
</comment>
<comment type="interaction">
    <interactant intactId="EBI-624505">
        <id>Q8NHU6</id>
    </interactant>
    <interactant intactId="EBI-624237">
        <id>O75410</id>
        <label>TACC1</label>
    </interactant>
    <organismsDiffer>false</organismsDiffer>
    <experiments>4</experiments>
</comment>
<comment type="interaction">
    <interactant intactId="EBI-624505">
        <id>Q8NHU6</id>
    </interactant>
    <interactant intactId="EBI-624252">
        <id>O75410-1</id>
        <label>TACC1</label>
    </interactant>
    <organismsDiffer>false</organismsDiffer>
    <experiments>3</experiments>
</comment>
<comment type="subcellular location">
    <subcellularLocation>
        <location evidence="8">Cytoplasm</location>
    </subcellularLocation>
    <text evidence="1">Localizes to cytoplasmic RNA granules. Present in chromatoid body (CB) of spermatids (mammalian counterpart of germplasm, pole plasm or polar granules in Drosophila germ cells), also named processing bodies (P-bodies) in somatic cells. Detected in the multilobular cytoplasmic CBs (also called intermitochondrial cementin) in pachytene spermatocytes and as a single perinuclear CB in haploid round spermatids (By similarity).</text>
</comment>
<comment type="alternative products">
    <event type="alternative splicing"/>
    <isoform>
        <id>Q8NHU6-1</id>
        <name>1</name>
        <sequence type="displayed"/>
    </isoform>
    <isoform>
        <id>Q8NHU6-2</id>
        <name>2</name>
        <sequence type="described" ref="VSP_041315"/>
    </isoform>
    <isoform>
        <id>Q8NHU6-3</id>
        <name>3</name>
        <sequence type="described" ref="VSP_041314 VSP_041316"/>
    </isoform>
</comment>
<comment type="disease" evidence="8">
    <disease id="DI-03070">
        <name>Cataract 36</name>
        <acronym>CTRCT36</acronym>
        <description>An opacification of the crystalline lens of the eye becoming evident at birth. It frequently results in visual impairment or blindness. Opacities vary in morphology, are often confined to a portion of the lens, and may be static or progressive. In general, the more posteriorly located and dense an opacity, the greater the impact on visual function.</description>
        <dbReference type="MIM" id="613887"/>
    </disease>
    <text>The disease is caused by variants affecting the gene represented in this entry.</text>
</comment>
<comment type="similarity">
    <text evidence="11">Belongs to the TDRD7 family.</text>
</comment>
<protein>
    <recommendedName>
        <fullName>Tudor domain-containing protein 7</fullName>
    </recommendedName>
    <alternativeName>
        <fullName>PCTAIRE2-binding protein</fullName>
    </alternativeName>
    <alternativeName>
        <fullName>Tudor repeat associator with PCTAIRE-2</fullName>
        <shortName>Trap</shortName>
    </alternativeName>
</protein>
<organism>
    <name type="scientific">Homo sapiens</name>
    <name type="common">Human</name>
    <dbReference type="NCBI Taxonomy" id="9606"/>
    <lineage>
        <taxon>Eukaryota</taxon>
        <taxon>Metazoa</taxon>
        <taxon>Chordata</taxon>
        <taxon>Craniata</taxon>
        <taxon>Vertebrata</taxon>
        <taxon>Euteleostomi</taxon>
        <taxon>Mammalia</taxon>
        <taxon>Eutheria</taxon>
        <taxon>Euarchontoglires</taxon>
        <taxon>Primates</taxon>
        <taxon>Haplorrhini</taxon>
        <taxon>Catarrhini</taxon>
        <taxon>Hominidae</taxon>
        <taxon>Homo</taxon>
    </lineage>
</organism>
<name>TDRD7_HUMAN</name>
<sequence>MLEGDLVSKMLRAVLQSHKNGVALPRLQGEYRSLTGDWIPFKQLGFPTLEAYLRSVPAVVRIETSRSGEITCYAMACTETARIAQLVARQRSSKRKTGRQVNCQMRVKKTMPFFLEGKPKATLRQPGFASNFSVGKKPNPAPLRDKGNSVGVKPDAEMSPYMLHTTLGNEAFKDIPVQRHVTMSTNNRFSPKASLQPPLQMHLSRTSTKEMSDNLNQTVEKPNVKPPASYTYKMDEVQNRIKEILNKHNNGIWISKLPHFYKELYKEDLNQGILQQFEHWPHICTVEKPCSGGQDLLLYPAKRKQLLRSELDTEKVPLSPLPGPKQTPPLKGCPTVMAGDFKEKVADLLVKYTSGLWASALPKAFEEMYKVKFPEDALKNLASLSDVCSIDYISGNPQKAILYAKLPLPTDKIQKDAGQAHGDNDIKAMVEQEYLQVEESIAESANTFMEDITVPPLMIPTEASPSVLVVELSNTNEVVIRYVGKDYSAAQELMEDEMKEYYSKNPKITPVQAVNVGQLLAVNAEEDAWLRAQVISTEENKIKVCYVDYGFSENVEKSKAYKLNPKFCSLSFQATKCKLAGLEVLSDDPDLVKVVESLTCGKIFAVEILDKADIPLVVLYDTSGEDDININATCLKAICDKSLEVHLQVDAMYTNVKVTNICSDGTLYCQVPCKGLNKLSDLLRKIEDYFHCKHMTSECFVSLPFCGKICLFHCKGKWLRVEITNVHSSRALDVQFLDSGTVTSVKVSELREIPPRFLQEMIAIPPQAIKCCLADLPQSIGMWTPDAVLWLRDSVLNCSDCSIKVTKVDETRGIAHVYLFTPKNFPDPHRSINRQITNADLWKHQKDVFLSAISSGADSPNSKNGNMPMSGNTGENFRKNLTDVIKKSMVDHTSAFSTEELPPPVHLSKPGEHMDVYVPVACHPGYFVIQPWQEIHKLEVLMEEMILYYSVSEERHIAVEKDQVYAAKVENKWHRVLLKGILTNGLVSVYELDYGKHELVNIRKVQPLVDMFRKLPFQAVTAQLAGVKCNQWSEEASMVFRNHVEKKPLVALVQTVIENANPWDRKVVVYLVDTSLPDTDTWIHDFMSEYLIELSKVN</sequence>
<reference key="1">
    <citation type="journal article" date="2004" name="Nat. Genet.">
        <title>Complete sequencing and characterization of 21,243 full-length human cDNAs.</title>
        <authorList>
            <person name="Ota T."/>
            <person name="Suzuki Y."/>
            <person name="Nishikawa T."/>
            <person name="Otsuki T."/>
            <person name="Sugiyama T."/>
            <person name="Irie R."/>
            <person name="Wakamatsu A."/>
            <person name="Hayashi K."/>
            <person name="Sato H."/>
            <person name="Nagai K."/>
            <person name="Kimura K."/>
            <person name="Makita H."/>
            <person name="Sekine M."/>
            <person name="Obayashi M."/>
            <person name="Nishi T."/>
            <person name="Shibahara T."/>
            <person name="Tanaka T."/>
            <person name="Ishii S."/>
            <person name="Yamamoto J."/>
            <person name="Saito K."/>
            <person name="Kawai Y."/>
            <person name="Isono Y."/>
            <person name="Nakamura Y."/>
            <person name="Nagahari K."/>
            <person name="Murakami K."/>
            <person name="Yasuda T."/>
            <person name="Iwayanagi T."/>
            <person name="Wagatsuma M."/>
            <person name="Shiratori A."/>
            <person name="Sudo H."/>
            <person name="Hosoiri T."/>
            <person name="Kaku Y."/>
            <person name="Kodaira H."/>
            <person name="Kondo H."/>
            <person name="Sugawara M."/>
            <person name="Takahashi M."/>
            <person name="Kanda K."/>
            <person name="Yokoi T."/>
            <person name="Furuya T."/>
            <person name="Kikkawa E."/>
            <person name="Omura Y."/>
            <person name="Abe K."/>
            <person name="Kamihara K."/>
            <person name="Katsuta N."/>
            <person name="Sato K."/>
            <person name="Tanikawa M."/>
            <person name="Yamazaki M."/>
            <person name="Ninomiya K."/>
            <person name="Ishibashi T."/>
            <person name="Yamashita H."/>
            <person name="Murakawa K."/>
            <person name="Fujimori K."/>
            <person name="Tanai H."/>
            <person name="Kimata M."/>
            <person name="Watanabe M."/>
            <person name="Hiraoka S."/>
            <person name="Chiba Y."/>
            <person name="Ishida S."/>
            <person name="Ono Y."/>
            <person name="Takiguchi S."/>
            <person name="Watanabe S."/>
            <person name="Yosida M."/>
            <person name="Hotuta T."/>
            <person name="Kusano J."/>
            <person name="Kanehori K."/>
            <person name="Takahashi-Fujii A."/>
            <person name="Hara H."/>
            <person name="Tanase T.-O."/>
            <person name="Nomura Y."/>
            <person name="Togiya S."/>
            <person name="Komai F."/>
            <person name="Hara R."/>
            <person name="Takeuchi K."/>
            <person name="Arita M."/>
            <person name="Imose N."/>
            <person name="Musashino K."/>
            <person name="Yuuki H."/>
            <person name="Oshima A."/>
            <person name="Sasaki N."/>
            <person name="Aotsuka S."/>
            <person name="Yoshikawa Y."/>
            <person name="Matsunawa H."/>
            <person name="Ichihara T."/>
            <person name="Shiohata N."/>
            <person name="Sano S."/>
            <person name="Moriya S."/>
            <person name="Momiyama H."/>
            <person name="Satoh N."/>
            <person name="Takami S."/>
            <person name="Terashima Y."/>
            <person name="Suzuki O."/>
            <person name="Nakagawa S."/>
            <person name="Senoh A."/>
            <person name="Mizoguchi H."/>
            <person name="Goto Y."/>
            <person name="Shimizu F."/>
            <person name="Wakebe H."/>
            <person name="Hishigaki H."/>
            <person name="Watanabe T."/>
            <person name="Sugiyama A."/>
            <person name="Takemoto M."/>
            <person name="Kawakami B."/>
            <person name="Yamazaki M."/>
            <person name="Watanabe K."/>
            <person name="Kumagai A."/>
            <person name="Itakura S."/>
            <person name="Fukuzumi Y."/>
            <person name="Fujimori Y."/>
            <person name="Komiyama M."/>
            <person name="Tashiro H."/>
            <person name="Tanigami A."/>
            <person name="Fujiwara T."/>
            <person name="Ono T."/>
            <person name="Yamada K."/>
            <person name="Fujii Y."/>
            <person name="Ozaki K."/>
            <person name="Hirao M."/>
            <person name="Ohmori Y."/>
            <person name="Kawabata A."/>
            <person name="Hikiji T."/>
            <person name="Kobatake N."/>
            <person name="Inagaki H."/>
            <person name="Ikema Y."/>
            <person name="Okamoto S."/>
            <person name="Okitani R."/>
            <person name="Kawakami T."/>
            <person name="Noguchi S."/>
            <person name="Itoh T."/>
            <person name="Shigeta K."/>
            <person name="Senba T."/>
            <person name="Matsumura K."/>
            <person name="Nakajima Y."/>
            <person name="Mizuno T."/>
            <person name="Morinaga M."/>
            <person name="Sasaki M."/>
            <person name="Togashi T."/>
            <person name="Oyama M."/>
            <person name="Hata H."/>
            <person name="Watanabe M."/>
            <person name="Komatsu T."/>
            <person name="Mizushima-Sugano J."/>
            <person name="Satoh T."/>
            <person name="Shirai Y."/>
            <person name="Takahashi Y."/>
            <person name="Nakagawa K."/>
            <person name="Okumura K."/>
            <person name="Nagase T."/>
            <person name="Nomura N."/>
            <person name="Kikuchi H."/>
            <person name="Masuho Y."/>
            <person name="Yamashita R."/>
            <person name="Nakai K."/>
            <person name="Yada T."/>
            <person name="Nakamura Y."/>
            <person name="Ohara O."/>
            <person name="Isogai T."/>
            <person name="Sugano S."/>
        </authorList>
    </citation>
    <scope>NUCLEOTIDE SEQUENCE [LARGE SCALE MRNA] (ISOFORMS 1; 2 AND 3)</scope>
    <scope>VARIANT ALA-150</scope>
    <source>
        <tissue>Amygdala</tissue>
        <tissue>Testis</tissue>
    </source>
</reference>
<reference key="2">
    <citation type="journal article" date="2004" name="Nature">
        <title>DNA sequence and analysis of human chromosome 9.</title>
        <authorList>
            <person name="Humphray S.J."/>
            <person name="Oliver K."/>
            <person name="Hunt A.R."/>
            <person name="Plumb R.W."/>
            <person name="Loveland J.E."/>
            <person name="Howe K.L."/>
            <person name="Andrews T.D."/>
            <person name="Searle S."/>
            <person name="Hunt S.E."/>
            <person name="Scott C.E."/>
            <person name="Jones M.C."/>
            <person name="Ainscough R."/>
            <person name="Almeida J.P."/>
            <person name="Ambrose K.D."/>
            <person name="Ashwell R.I.S."/>
            <person name="Babbage A.K."/>
            <person name="Babbage S."/>
            <person name="Bagguley C.L."/>
            <person name="Bailey J."/>
            <person name="Banerjee R."/>
            <person name="Barker D.J."/>
            <person name="Barlow K.F."/>
            <person name="Bates K."/>
            <person name="Beasley H."/>
            <person name="Beasley O."/>
            <person name="Bird C.P."/>
            <person name="Bray-Allen S."/>
            <person name="Brown A.J."/>
            <person name="Brown J.Y."/>
            <person name="Burford D."/>
            <person name="Burrill W."/>
            <person name="Burton J."/>
            <person name="Carder C."/>
            <person name="Carter N.P."/>
            <person name="Chapman J.C."/>
            <person name="Chen Y."/>
            <person name="Clarke G."/>
            <person name="Clark S.Y."/>
            <person name="Clee C.M."/>
            <person name="Clegg S."/>
            <person name="Collier R.E."/>
            <person name="Corby N."/>
            <person name="Crosier M."/>
            <person name="Cummings A.T."/>
            <person name="Davies J."/>
            <person name="Dhami P."/>
            <person name="Dunn M."/>
            <person name="Dutta I."/>
            <person name="Dyer L.W."/>
            <person name="Earthrowl M.E."/>
            <person name="Faulkner L."/>
            <person name="Fleming C.J."/>
            <person name="Frankish A."/>
            <person name="Frankland J.A."/>
            <person name="French L."/>
            <person name="Fricker D.G."/>
            <person name="Garner P."/>
            <person name="Garnett J."/>
            <person name="Ghori J."/>
            <person name="Gilbert J.G.R."/>
            <person name="Glison C."/>
            <person name="Grafham D.V."/>
            <person name="Gribble S."/>
            <person name="Griffiths C."/>
            <person name="Griffiths-Jones S."/>
            <person name="Grocock R."/>
            <person name="Guy J."/>
            <person name="Hall R.E."/>
            <person name="Hammond S."/>
            <person name="Harley J.L."/>
            <person name="Harrison E.S.I."/>
            <person name="Hart E.A."/>
            <person name="Heath P.D."/>
            <person name="Henderson C.D."/>
            <person name="Hopkins B.L."/>
            <person name="Howard P.J."/>
            <person name="Howden P.J."/>
            <person name="Huckle E."/>
            <person name="Johnson C."/>
            <person name="Johnson D."/>
            <person name="Joy A.A."/>
            <person name="Kay M."/>
            <person name="Keenan S."/>
            <person name="Kershaw J.K."/>
            <person name="Kimberley A.M."/>
            <person name="King A."/>
            <person name="Knights A."/>
            <person name="Laird G.K."/>
            <person name="Langford C."/>
            <person name="Lawlor S."/>
            <person name="Leongamornlert D.A."/>
            <person name="Leversha M."/>
            <person name="Lloyd C."/>
            <person name="Lloyd D.M."/>
            <person name="Lovell J."/>
            <person name="Martin S."/>
            <person name="Mashreghi-Mohammadi M."/>
            <person name="Matthews L."/>
            <person name="McLaren S."/>
            <person name="McLay K.E."/>
            <person name="McMurray A."/>
            <person name="Milne S."/>
            <person name="Nickerson T."/>
            <person name="Nisbett J."/>
            <person name="Nordsiek G."/>
            <person name="Pearce A.V."/>
            <person name="Peck A.I."/>
            <person name="Porter K.M."/>
            <person name="Pandian R."/>
            <person name="Pelan S."/>
            <person name="Phillimore B."/>
            <person name="Povey S."/>
            <person name="Ramsey Y."/>
            <person name="Rand V."/>
            <person name="Scharfe M."/>
            <person name="Sehra H.K."/>
            <person name="Shownkeen R."/>
            <person name="Sims S.K."/>
            <person name="Skuce C.D."/>
            <person name="Smith M."/>
            <person name="Steward C.A."/>
            <person name="Swarbreck D."/>
            <person name="Sycamore N."/>
            <person name="Tester J."/>
            <person name="Thorpe A."/>
            <person name="Tracey A."/>
            <person name="Tromans A."/>
            <person name="Thomas D.W."/>
            <person name="Wall M."/>
            <person name="Wallis J.M."/>
            <person name="West A.P."/>
            <person name="Whitehead S.L."/>
            <person name="Willey D.L."/>
            <person name="Williams S.A."/>
            <person name="Wilming L."/>
            <person name="Wray P.W."/>
            <person name="Young L."/>
            <person name="Ashurst J.L."/>
            <person name="Coulson A."/>
            <person name="Blocker H."/>
            <person name="Durbin R.M."/>
            <person name="Sulston J.E."/>
            <person name="Hubbard T."/>
            <person name="Jackson M.J."/>
            <person name="Bentley D.R."/>
            <person name="Beck S."/>
            <person name="Rogers J."/>
            <person name="Dunham I."/>
        </authorList>
    </citation>
    <scope>NUCLEOTIDE SEQUENCE [LARGE SCALE GENOMIC DNA]</scope>
</reference>
<reference key="3">
    <citation type="submission" date="2005-07" db="EMBL/GenBank/DDBJ databases">
        <authorList>
            <person name="Mural R.J."/>
            <person name="Istrail S."/>
            <person name="Sutton G.G."/>
            <person name="Florea L."/>
            <person name="Halpern A.L."/>
            <person name="Mobarry C.M."/>
            <person name="Lippert R."/>
            <person name="Walenz B."/>
            <person name="Shatkay H."/>
            <person name="Dew I."/>
            <person name="Miller J.R."/>
            <person name="Flanigan M.J."/>
            <person name="Edwards N.J."/>
            <person name="Bolanos R."/>
            <person name="Fasulo D."/>
            <person name="Halldorsson B.V."/>
            <person name="Hannenhalli S."/>
            <person name="Turner R."/>
            <person name="Yooseph S."/>
            <person name="Lu F."/>
            <person name="Nusskern D.R."/>
            <person name="Shue B.C."/>
            <person name="Zheng X.H."/>
            <person name="Zhong F."/>
            <person name="Delcher A.L."/>
            <person name="Huson D.H."/>
            <person name="Kravitz S.A."/>
            <person name="Mouchard L."/>
            <person name="Reinert K."/>
            <person name="Remington K.A."/>
            <person name="Clark A.G."/>
            <person name="Waterman M.S."/>
            <person name="Eichler E.E."/>
            <person name="Adams M.D."/>
            <person name="Hunkapiller M.W."/>
            <person name="Myers E.W."/>
            <person name="Venter J.C."/>
        </authorList>
    </citation>
    <scope>NUCLEOTIDE SEQUENCE [LARGE SCALE GENOMIC DNA]</scope>
    <scope>VARIANT ALA-150</scope>
</reference>
<reference key="4">
    <citation type="journal article" date="2004" name="Genome Res.">
        <title>The status, quality, and expansion of the NIH full-length cDNA project: the Mammalian Gene Collection (MGC).</title>
        <authorList>
            <consortium name="The MGC Project Team"/>
        </authorList>
    </citation>
    <scope>NUCLEOTIDE SEQUENCE [LARGE SCALE MRNA] (ISOFORM 1)</scope>
    <scope>VARIANT LEU-456</scope>
    <source>
        <tissue>Testis</tissue>
    </source>
</reference>
<reference key="5">
    <citation type="journal article" date="2000" name="Eur. J. Biochem.">
        <title>Identification of tudor repeat associator with PCTAIRE 2 (Trap). A novel protein that interacts with the N-terminal domain of PCTAIRE 2 in rat brain.</title>
        <authorList>
            <person name="Hirose T."/>
            <person name="Kawabuchi M."/>
            <person name="Tamaru T."/>
            <person name="Okumura N."/>
            <person name="Nagai K."/>
            <person name="Okada M."/>
        </authorList>
    </citation>
    <scope>NUCLEOTIDE SEQUENCE [MRNA] OF 631-1098</scope>
    <source>
        <tissue>Brain</tissue>
    </source>
</reference>
<reference key="6">
    <citation type="journal article" date="2007" name="BMC Genomics">
        <title>The full-ORF clone resource of the German cDNA consortium.</title>
        <authorList>
            <person name="Bechtel S."/>
            <person name="Rosenfelder H."/>
            <person name="Duda A."/>
            <person name="Schmidt C.P."/>
            <person name="Ernst U."/>
            <person name="Wellenreuther R."/>
            <person name="Mehrle A."/>
            <person name="Schuster C."/>
            <person name="Bahr A."/>
            <person name="Bloecker H."/>
            <person name="Heubner D."/>
            <person name="Hoerlein A."/>
            <person name="Michel G."/>
            <person name="Wedler H."/>
            <person name="Koehrer K."/>
            <person name="Ottenwaelder B."/>
            <person name="Poustka A."/>
            <person name="Wiemann S."/>
            <person name="Schupp I."/>
        </authorList>
    </citation>
    <scope>NUCLEOTIDE SEQUENCE [LARGE SCALE MRNA] OF 837-1098</scope>
    <source>
        <tissue>Testis</tissue>
    </source>
</reference>
<reference key="7">
    <citation type="journal article" date="2009" name="Anal. Chem.">
        <title>Lys-N and trypsin cover complementary parts of the phosphoproteome in a refined SCX-based approach.</title>
        <authorList>
            <person name="Gauci S."/>
            <person name="Helbig A.O."/>
            <person name="Slijper M."/>
            <person name="Krijgsveld J."/>
            <person name="Heck A.J."/>
            <person name="Mohammed S."/>
        </authorList>
    </citation>
    <scope>IDENTIFICATION BY MASS SPECTROMETRY [LARGE SCALE ANALYSIS]</scope>
</reference>
<reference key="8">
    <citation type="journal article" date="2009" name="Sci. Signal.">
        <title>Quantitative phosphoproteomic analysis of T cell receptor signaling reveals system-wide modulation of protein-protein interactions.</title>
        <authorList>
            <person name="Mayya V."/>
            <person name="Lundgren D.H."/>
            <person name="Hwang S.-I."/>
            <person name="Rezaul K."/>
            <person name="Wu L."/>
            <person name="Eng J.K."/>
            <person name="Rodionov V."/>
            <person name="Han D.K."/>
        </authorList>
    </citation>
    <scope>IDENTIFICATION BY MASS SPECTROMETRY [LARGE SCALE ANALYSIS]</scope>
    <source>
        <tissue>Leukemic T-cell</tissue>
    </source>
</reference>
<reference key="9">
    <citation type="journal article" date="2010" name="Bioinformatics">
        <title>LOTUS, a new domain associated with small RNA pathways in the germline.</title>
        <authorList>
            <person name="Callebaut I."/>
            <person name="Mornon J.P."/>
        </authorList>
    </citation>
    <scope>IDENTIFICATION OF THE HTH OST-TYPE DOMAIN</scope>
</reference>
<reference key="10">
    <citation type="journal article" date="2010" name="Biol. Direct">
        <title>OST-HTH: a novel predicted RNA-binding domain.</title>
        <authorList>
            <person name="Anantharaman V."/>
            <person name="Zhang D."/>
            <person name="Aravind L."/>
        </authorList>
    </citation>
    <scope>IDENTIFICATION OF THE HTH OST-TYPE DOMAIN</scope>
</reference>
<reference key="11">
    <citation type="journal article" date="2011" name="Science">
        <title>Mutations in the RNA granule component TDRD7 cause cataract and glaucoma.</title>
        <authorList>
            <person name="Lachke S.A."/>
            <person name="Alkuraya F.S."/>
            <person name="Kneeland S.C."/>
            <person name="Ohn T."/>
            <person name="Aboukhalil A."/>
            <person name="Howell G.R."/>
            <person name="Saadi I."/>
            <person name="Cavallesco R."/>
            <person name="Yue Y."/>
            <person name="Tsai A.C."/>
            <person name="Nair K.S."/>
            <person name="Cosma M.I."/>
            <person name="Smith R.S."/>
            <person name="Hodges E."/>
            <person name="Alfadhli S.M."/>
            <person name="Al-Hajeri A."/>
            <person name="Shamseldin H.E."/>
            <person name="Behbehani A."/>
            <person name="Hannon G.J."/>
            <person name="Bulyk M.L."/>
            <person name="Drack A.V."/>
            <person name="Anderson P.J."/>
            <person name="John S.W."/>
            <person name="Maas R.L."/>
        </authorList>
    </citation>
    <scope>FUNCTION</scope>
    <scope>RNA-BINDING</scope>
    <scope>SUBCELLULAR LOCATION</scope>
    <scope>VARIANT CTRCT36 VAL-618 DEL</scope>
</reference>
<reference key="12">
    <citation type="journal article" date="2012" name="Proc. Natl. Acad. Sci. U.S.A.">
        <title>N-terminal acetylome analyses and functional insights of the N-terminal acetyltransferase NatB.</title>
        <authorList>
            <person name="Van Damme P."/>
            <person name="Lasa M."/>
            <person name="Polevoda B."/>
            <person name="Gazquez C."/>
            <person name="Elosegui-Artola A."/>
            <person name="Kim D.S."/>
            <person name="De Juan-Pardo E."/>
            <person name="Demeyer K."/>
            <person name="Hole K."/>
            <person name="Larrea E."/>
            <person name="Timmerman E."/>
            <person name="Prieto J."/>
            <person name="Arnesen T."/>
            <person name="Sherman F."/>
            <person name="Gevaert K."/>
            <person name="Aldabe R."/>
        </authorList>
    </citation>
    <scope>IDENTIFICATION BY MASS SPECTROMETRY [LARGE SCALE ANALYSIS]</scope>
</reference>
<reference key="13">
    <citation type="journal article" date="2013" name="J. Proteome Res.">
        <title>Toward a comprehensive characterization of a human cancer cell phosphoproteome.</title>
        <authorList>
            <person name="Zhou H."/>
            <person name="Di Palma S."/>
            <person name="Preisinger C."/>
            <person name="Peng M."/>
            <person name="Polat A.N."/>
            <person name="Heck A.J."/>
            <person name="Mohammed S."/>
        </authorList>
    </citation>
    <scope>PHOSPHORYLATION [LARGE SCALE ANALYSIS] AT SER-319</scope>
    <scope>IDENTIFICATION BY MASS SPECTROMETRY [LARGE SCALE ANALYSIS]</scope>
    <source>
        <tissue>Erythroleukemia</tissue>
    </source>
</reference>
<dbReference type="EMBL" id="AK294488">
    <property type="protein sequence ID" value="BAG57710.1"/>
    <property type="molecule type" value="mRNA"/>
</dbReference>
<dbReference type="EMBL" id="AK301954">
    <property type="protein sequence ID" value="BAG63369.1"/>
    <property type="molecule type" value="mRNA"/>
</dbReference>
<dbReference type="EMBL" id="AK314853">
    <property type="protein sequence ID" value="BAG37370.1"/>
    <property type="molecule type" value="mRNA"/>
</dbReference>
<dbReference type="EMBL" id="AL449464">
    <property type="status" value="NOT_ANNOTATED_CDS"/>
    <property type="molecule type" value="Genomic_DNA"/>
</dbReference>
<dbReference type="EMBL" id="AL512590">
    <property type="status" value="NOT_ANNOTATED_CDS"/>
    <property type="molecule type" value="Genomic_DNA"/>
</dbReference>
<dbReference type="EMBL" id="CH471105">
    <property type="protein sequence ID" value="EAW58844.1"/>
    <property type="molecule type" value="Genomic_DNA"/>
</dbReference>
<dbReference type="EMBL" id="BC028694">
    <property type="protein sequence ID" value="AAH28694.1"/>
    <property type="molecule type" value="mRNA"/>
</dbReference>
<dbReference type="EMBL" id="AB025254">
    <property type="protein sequence ID" value="BAA76379.1"/>
    <property type="molecule type" value="mRNA"/>
</dbReference>
<dbReference type="EMBL" id="AL122110">
    <property type="protein sequence ID" value="CAB59271.1"/>
    <property type="molecule type" value="mRNA"/>
</dbReference>
<dbReference type="CCDS" id="CCDS6725.1">
    <molecule id="Q8NHU6-1"/>
</dbReference>
<dbReference type="PIR" id="T34547">
    <property type="entry name" value="T34547"/>
</dbReference>
<dbReference type="RefSeq" id="NP_001289813.1">
    <molecule id="Q8NHU6-2"/>
    <property type="nucleotide sequence ID" value="NM_001302884.2"/>
</dbReference>
<dbReference type="RefSeq" id="NP_055105.2">
    <molecule id="Q8NHU6-1"/>
    <property type="nucleotide sequence ID" value="NM_014290.3"/>
</dbReference>
<dbReference type="RefSeq" id="XP_047279067.1">
    <molecule id="Q8NHU6-1"/>
    <property type="nucleotide sequence ID" value="XM_047423111.1"/>
</dbReference>
<dbReference type="RefSeq" id="XP_054218525.1">
    <molecule id="Q8NHU6-1"/>
    <property type="nucleotide sequence ID" value="XM_054362550.1"/>
</dbReference>
<dbReference type="PDB" id="3RCO">
    <property type="method" value="X-ray"/>
    <property type="resolution" value="1.80 A"/>
    <property type="chains" value="A/B=1-82"/>
</dbReference>
<dbReference type="PDBsum" id="3RCO"/>
<dbReference type="SMR" id="Q8NHU6"/>
<dbReference type="BioGRID" id="116994">
    <property type="interactions" value="51"/>
</dbReference>
<dbReference type="FunCoup" id="Q8NHU6">
    <property type="interactions" value="492"/>
</dbReference>
<dbReference type="IntAct" id="Q8NHU6">
    <property type="interactions" value="31"/>
</dbReference>
<dbReference type="MINT" id="Q8NHU6"/>
<dbReference type="STRING" id="9606.ENSP00000347444"/>
<dbReference type="ChEMBL" id="CHEMBL4105828"/>
<dbReference type="GlyGen" id="Q8NHU6">
    <property type="glycosylation" value="2 sites, 1 O-linked glycan (2 sites)"/>
</dbReference>
<dbReference type="iPTMnet" id="Q8NHU6"/>
<dbReference type="PhosphoSitePlus" id="Q8NHU6"/>
<dbReference type="BioMuta" id="TDRD7"/>
<dbReference type="DMDM" id="152031705"/>
<dbReference type="jPOST" id="Q8NHU6"/>
<dbReference type="MassIVE" id="Q8NHU6"/>
<dbReference type="PaxDb" id="9606-ENSP00000347444"/>
<dbReference type="PeptideAtlas" id="Q8NHU6"/>
<dbReference type="ProteomicsDB" id="73759">
    <molecule id="Q8NHU6-1"/>
</dbReference>
<dbReference type="ProteomicsDB" id="73760">
    <molecule id="Q8NHU6-2"/>
</dbReference>
<dbReference type="ProteomicsDB" id="73761">
    <molecule id="Q8NHU6-3"/>
</dbReference>
<dbReference type="Pumba" id="Q8NHU6"/>
<dbReference type="Antibodypedia" id="14331">
    <property type="antibodies" value="99 antibodies from 22 providers"/>
</dbReference>
<dbReference type="DNASU" id="23424"/>
<dbReference type="Ensembl" id="ENST00000355295.5">
    <molecule id="Q8NHU6-1"/>
    <property type="protein sequence ID" value="ENSP00000347444.4"/>
    <property type="gene ID" value="ENSG00000196116.8"/>
</dbReference>
<dbReference type="GeneID" id="23424"/>
<dbReference type="KEGG" id="hsa:23424"/>
<dbReference type="MANE-Select" id="ENST00000355295.5">
    <property type="protein sequence ID" value="ENSP00000347444.4"/>
    <property type="RefSeq nucleotide sequence ID" value="NM_014290.3"/>
    <property type="RefSeq protein sequence ID" value="NP_055105.2"/>
</dbReference>
<dbReference type="UCSC" id="uc004axj.4">
    <molecule id="Q8NHU6-1"/>
    <property type="organism name" value="human"/>
</dbReference>
<dbReference type="AGR" id="HGNC:30831"/>
<dbReference type="CTD" id="23424"/>
<dbReference type="DisGeNET" id="23424"/>
<dbReference type="GeneCards" id="TDRD7"/>
<dbReference type="HGNC" id="HGNC:30831">
    <property type="gene designation" value="TDRD7"/>
</dbReference>
<dbReference type="HPA" id="ENSG00000196116">
    <property type="expression patterns" value="Tissue enhanced (retina)"/>
</dbReference>
<dbReference type="MalaCards" id="TDRD7"/>
<dbReference type="MIM" id="611258">
    <property type="type" value="gene"/>
</dbReference>
<dbReference type="MIM" id="613887">
    <property type="type" value="phenotype"/>
</dbReference>
<dbReference type="neXtProt" id="NX_Q8NHU6"/>
<dbReference type="OpenTargets" id="ENSG00000196116"/>
<dbReference type="PharmGKB" id="PA134937960"/>
<dbReference type="VEuPathDB" id="HostDB:ENSG00000196116"/>
<dbReference type="eggNOG" id="KOG2039">
    <property type="taxonomic scope" value="Eukaryota"/>
</dbReference>
<dbReference type="GeneTree" id="ENSGT00890000139482"/>
<dbReference type="HOGENOM" id="CLU_283554_0_0_1"/>
<dbReference type="InParanoid" id="Q8NHU6"/>
<dbReference type="OMA" id="DIPMQRH"/>
<dbReference type="OrthoDB" id="10034606at2759"/>
<dbReference type="PAN-GO" id="Q8NHU6">
    <property type="GO annotations" value="6 GO annotations based on evolutionary models"/>
</dbReference>
<dbReference type="PhylomeDB" id="Q8NHU6"/>
<dbReference type="PathwayCommons" id="Q8NHU6"/>
<dbReference type="SignaLink" id="Q8NHU6"/>
<dbReference type="BioGRID-ORCS" id="23424">
    <property type="hits" value="7 hits in 1158 CRISPR screens"/>
</dbReference>
<dbReference type="CD-CODE" id="232F8A39">
    <property type="entry name" value="P-body"/>
</dbReference>
<dbReference type="CD-CODE" id="DEE660B4">
    <property type="entry name" value="Stress granule"/>
</dbReference>
<dbReference type="ChiTaRS" id="TDRD7">
    <property type="organism name" value="human"/>
</dbReference>
<dbReference type="EvolutionaryTrace" id="Q8NHU6"/>
<dbReference type="GeneWiki" id="TDRD7"/>
<dbReference type="GenomeRNAi" id="23424"/>
<dbReference type="Pharos" id="Q8NHU6">
    <property type="development level" value="Tbio"/>
</dbReference>
<dbReference type="PRO" id="PR:Q8NHU6"/>
<dbReference type="Proteomes" id="UP000005640">
    <property type="component" value="Chromosome 9"/>
</dbReference>
<dbReference type="RNAct" id="Q8NHU6">
    <property type="molecule type" value="protein"/>
</dbReference>
<dbReference type="Bgee" id="ENSG00000196116">
    <property type="expression patterns" value="Expressed in secondary oocyte and 203 other cell types or tissues"/>
</dbReference>
<dbReference type="GO" id="GO:0033391">
    <property type="term" value="C:chromatoid body"/>
    <property type="evidence" value="ECO:0000250"/>
    <property type="project" value="UniProtKB"/>
</dbReference>
<dbReference type="GO" id="GO:0005737">
    <property type="term" value="C:cytoplasm"/>
    <property type="evidence" value="ECO:0000250"/>
    <property type="project" value="UniProtKB"/>
</dbReference>
<dbReference type="GO" id="GO:0043186">
    <property type="term" value="C:P granule"/>
    <property type="evidence" value="ECO:0000318"/>
    <property type="project" value="GO_Central"/>
</dbReference>
<dbReference type="GO" id="GO:0035770">
    <property type="term" value="C:ribonucleoprotein granule"/>
    <property type="evidence" value="ECO:0000314"/>
    <property type="project" value="UniProtKB"/>
</dbReference>
<dbReference type="GO" id="GO:0003729">
    <property type="term" value="F:mRNA binding"/>
    <property type="evidence" value="ECO:0000314"/>
    <property type="project" value="UniProtKB"/>
</dbReference>
<dbReference type="GO" id="GO:0070306">
    <property type="term" value="P:lens fiber cell differentiation"/>
    <property type="evidence" value="ECO:0000315"/>
    <property type="project" value="UniProtKB"/>
</dbReference>
<dbReference type="GO" id="GO:0002089">
    <property type="term" value="P:lens morphogenesis in camera-type eye"/>
    <property type="evidence" value="ECO:0000315"/>
    <property type="project" value="UniProtKB"/>
</dbReference>
<dbReference type="GO" id="GO:0030719">
    <property type="term" value="P:P granule organization"/>
    <property type="evidence" value="ECO:0000318"/>
    <property type="project" value="GO_Central"/>
</dbReference>
<dbReference type="GO" id="GO:0034587">
    <property type="term" value="P:piRNA processing"/>
    <property type="evidence" value="ECO:0000318"/>
    <property type="project" value="GO_Central"/>
</dbReference>
<dbReference type="GO" id="GO:0010608">
    <property type="term" value="P:post-transcriptional regulation of gene expression"/>
    <property type="evidence" value="ECO:0000315"/>
    <property type="project" value="UniProtKB"/>
</dbReference>
<dbReference type="GO" id="GO:0007283">
    <property type="term" value="P:spermatogenesis"/>
    <property type="evidence" value="ECO:0000250"/>
    <property type="project" value="UniProtKB"/>
</dbReference>
<dbReference type="CDD" id="cd09986">
    <property type="entry name" value="LOTUS_1_TDRD7"/>
    <property type="match status" value="1"/>
</dbReference>
<dbReference type="CDD" id="cd09973">
    <property type="entry name" value="LOTUS_2_TDRD7"/>
    <property type="match status" value="1"/>
</dbReference>
<dbReference type="CDD" id="cd09974">
    <property type="entry name" value="LOTUS_3_TDRD7"/>
    <property type="match status" value="1"/>
</dbReference>
<dbReference type="CDD" id="cd20427">
    <property type="entry name" value="Tudor_TDRD7_rpt1"/>
    <property type="match status" value="1"/>
</dbReference>
<dbReference type="CDD" id="cd20428">
    <property type="entry name" value="Tudor_TDRD7_rpt2"/>
    <property type="match status" value="1"/>
</dbReference>
<dbReference type="CDD" id="cd20429">
    <property type="entry name" value="Tudor_TDRD7_rpt3"/>
    <property type="match status" value="1"/>
</dbReference>
<dbReference type="FunFam" id="2.40.50.90:FF:000006">
    <property type="entry name" value="Tudor domain-containing protein 7"/>
    <property type="match status" value="1"/>
</dbReference>
<dbReference type="FunFam" id="3.30.420.610:FF:000008">
    <property type="entry name" value="Tudor domain-containing protein 7"/>
    <property type="match status" value="1"/>
</dbReference>
<dbReference type="FunFam" id="2.30.30.140:FF:000065">
    <property type="entry name" value="tudor domain-containing protein 7"/>
    <property type="match status" value="1"/>
</dbReference>
<dbReference type="FunFam" id="2.30.30.140:FF:000045">
    <property type="entry name" value="tudor domain-containing protein 7 isoform X1"/>
    <property type="match status" value="1"/>
</dbReference>
<dbReference type="FunFam" id="3.30.420.610:FF:000009">
    <property type="entry name" value="Tudor domain-containing protein 7 isoform X2"/>
    <property type="match status" value="1"/>
</dbReference>
<dbReference type="FunFam" id="2.30.30.140:FF:000053">
    <property type="entry name" value="tudor domain-containing protein 7 isoform X2"/>
    <property type="match status" value="1"/>
</dbReference>
<dbReference type="FunFam" id="3.30.420.610:FF:000006">
    <property type="entry name" value="tudor domain-containing protein 7 isoform X2"/>
    <property type="match status" value="1"/>
</dbReference>
<dbReference type="Gene3D" id="2.30.30.140">
    <property type="match status" value="3"/>
</dbReference>
<dbReference type="Gene3D" id="2.40.50.90">
    <property type="match status" value="3"/>
</dbReference>
<dbReference type="Gene3D" id="3.30.420.610">
    <property type="entry name" value="LOTUS domain-like"/>
    <property type="match status" value="3"/>
</dbReference>
<dbReference type="InterPro" id="IPR041966">
    <property type="entry name" value="LOTUS-like"/>
</dbReference>
<dbReference type="InterPro" id="IPR025605">
    <property type="entry name" value="OST-HTH/LOTUS_dom"/>
</dbReference>
<dbReference type="InterPro" id="IPR035437">
    <property type="entry name" value="SNase_OB-fold_sf"/>
</dbReference>
<dbReference type="InterPro" id="IPR037978">
    <property type="entry name" value="TDRD7_LOTUS_3"/>
</dbReference>
<dbReference type="InterPro" id="IPR002999">
    <property type="entry name" value="Tudor"/>
</dbReference>
<dbReference type="InterPro" id="IPR050621">
    <property type="entry name" value="Tudor_domain_containing"/>
</dbReference>
<dbReference type="InterPro" id="IPR047448">
    <property type="entry name" value="Tudor_TDRD7_rpt2"/>
</dbReference>
<dbReference type="InterPro" id="IPR047449">
    <property type="entry name" value="Tudor_TDRD7_rpt3"/>
</dbReference>
<dbReference type="PANTHER" id="PTHR22948">
    <property type="entry name" value="TUDOR DOMAIN CONTAINING PROTEIN"/>
    <property type="match status" value="1"/>
</dbReference>
<dbReference type="PANTHER" id="PTHR22948:SF14">
    <property type="entry name" value="TUDOR DOMAIN-CONTAINING PROTEIN 7"/>
    <property type="match status" value="1"/>
</dbReference>
<dbReference type="Pfam" id="PF12872">
    <property type="entry name" value="OST-HTH"/>
    <property type="match status" value="2"/>
</dbReference>
<dbReference type="Pfam" id="PF00567">
    <property type="entry name" value="TUDOR"/>
    <property type="match status" value="3"/>
</dbReference>
<dbReference type="SMART" id="SM00333">
    <property type="entry name" value="TUDOR"/>
    <property type="match status" value="2"/>
</dbReference>
<dbReference type="SUPFAM" id="SSF63748">
    <property type="entry name" value="Tudor/PWWP/MBT"/>
    <property type="match status" value="3"/>
</dbReference>
<dbReference type="PROSITE" id="PS51644">
    <property type="entry name" value="HTH_OST"/>
    <property type="match status" value="3"/>
</dbReference>
<dbReference type="PROSITE" id="PS50304">
    <property type="entry name" value="TUDOR"/>
    <property type="match status" value="2"/>
</dbReference>
<proteinExistence type="evidence at protein level"/>
<accession>Q8NHU6</accession>
<accession>A6NCI6</accession>
<accession>B2RBX3</accession>
<accession>B4DG99</accession>
<accession>B4DXF7</accession>
<accession>E7EQD4</accession>
<accession>Q5VV27</accession>
<accession>Q96JT1</accession>
<accession>Q9UFF0</accession>
<accession>Q9Y2M3</accession>
<evidence type="ECO:0000250" key="1"/>
<evidence type="ECO:0000250" key="2">
    <source>
        <dbReference type="UniProtKB" id="Q8K1H1"/>
    </source>
</evidence>
<evidence type="ECO:0000255" key="3">
    <source>
        <dbReference type="PROSITE-ProRule" id="PRU00211"/>
    </source>
</evidence>
<evidence type="ECO:0000255" key="4">
    <source>
        <dbReference type="PROSITE-ProRule" id="PRU00975"/>
    </source>
</evidence>
<evidence type="ECO:0000256" key="5">
    <source>
        <dbReference type="SAM" id="MobiDB-lite"/>
    </source>
</evidence>
<evidence type="ECO:0000269" key="6">
    <source>
    </source>
</evidence>
<evidence type="ECO:0000269" key="7">
    <source>
    </source>
</evidence>
<evidence type="ECO:0000269" key="8">
    <source>
    </source>
</evidence>
<evidence type="ECO:0000269" key="9">
    <source ref="3"/>
</evidence>
<evidence type="ECO:0000303" key="10">
    <source>
    </source>
</evidence>
<evidence type="ECO:0000305" key="11"/>
<evidence type="ECO:0007744" key="12">
    <source>
    </source>
</evidence>
<evidence type="ECO:0007829" key="13">
    <source>
        <dbReference type="PDB" id="3RCO"/>
    </source>
</evidence>
<feature type="chain" id="PRO_0000183169" description="Tudor domain-containing protein 7">
    <location>
        <begin position="1"/>
        <end position="1098"/>
    </location>
</feature>
<feature type="domain" description="HTH OST-type 1" evidence="4">
    <location>
        <begin position="3"/>
        <end position="76"/>
    </location>
</feature>
<feature type="domain" description="HTH OST-type 2" evidence="4">
    <location>
        <begin position="233"/>
        <end position="302"/>
    </location>
</feature>
<feature type="domain" description="HTH OST-type 3" evidence="4">
    <location>
        <begin position="337"/>
        <end position="406"/>
    </location>
</feature>
<feature type="domain" description="Tudor 1" evidence="3">
    <location>
        <begin position="513"/>
        <end position="570"/>
    </location>
</feature>
<feature type="domain" description="Tudor 2" evidence="3">
    <location>
        <begin position="703"/>
        <end position="760"/>
    </location>
</feature>
<feature type="region of interest" description="Disordered" evidence="5">
    <location>
        <begin position="129"/>
        <end position="156"/>
    </location>
</feature>
<feature type="region of interest" description="Disordered" evidence="5">
    <location>
        <begin position="855"/>
        <end position="874"/>
    </location>
</feature>
<feature type="region of interest" description="Interaction with CDK17" evidence="1">
    <location>
        <begin position="861"/>
        <end position="1098"/>
    </location>
</feature>
<feature type="region of interest" description="Interaction with CABLES1" evidence="1">
    <location>
        <begin position="893"/>
        <end position="1098"/>
    </location>
</feature>
<feature type="modified residue" description="Phosphoserine" evidence="12">
    <location>
        <position position="319"/>
    </location>
</feature>
<feature type="modified residue" description="Phosphoserine" evidence="2">
    <location>
        <position position="859"/>
    </location>
</feature>
<feature type="splice variant" id="VSP_041314" description="In isoform 3." evidence="10">
    <location>
        <begin position="1"/>
        <end position="651"/>
    </location>
</feature>
<feature type="splice variant" id="VSP_041315" description="In isoform 2." evidence="10">
    <location>
        <begin position="1"/>
        <end position="74"/>
    </location>
</feature>
<feature type="splice variant" id="VSP_041316" description="In isoform 3." evidence="10">
    <location>
        <begin position="694"/>
        <end position="722"/>
    </location>
</feature>
<feature type="sequence variant" id="VAR_019070" description="In dbSNP:rs2045732." evidence="6 9">
    <original>V</original>
    <variation>A</variation>
    <location>
        <position position="150"/>
    </location>
</feature>
<feature type="sequence variant" id="VAR_033044" description="In dbSNP:rs17852595." evidence="7">
    <original>P</original>
    <variation>L</variation>
    <location>
        <position position="456"/>
    </location>
</feature>
<feature type="sequence variant" id="VAR_065247" description="In CTRCT36; dbSNP:rs750207077." evidence="8">
    <location>
        <position position="618"/>
    </location>
</feature>
<feature type="sequence conflict" description="In Ref. 1; BAG63369." evidence="11" ref="1">
    <original>T</original>
    <variation>A</variation>
    <location>
        <position position="659"/>
    </location>
</feature>
<feature type="helix" evidence="13">
    <location>
        <begin position="3"/>
        <end position="16"/>
    </location>
</feature>
<feature type="helix" evidence="13">
    <location>
        <begin position="24"/>
        <end position="35"/>
    </location>
</feature>
<feature type="turn" evidence="13">
    <location>
        <begin position="41"/>
        <end position="45"/>
    </location>
</feature>
<feature type="helix" evidence="13">
    <location>
        <begin position="49"/>
        <end position="54"/>
    </location>
</feature>
<feature type="turn" evidence="13">
    <location>
        <begin position="57"/>
        <end position="59"/>
    </location>
</feature>
<feature type="strand" evidence="13">
    <location>
        <begin position="60"/>
        <end position="64"/>
    </location>
</feature>
<feature type="strand" evidence="13">
    <location>
        <begin position="70"/>
        <end position="74"/>
    </location>
</feature>